<organism>
    <name type="scientific">Methylacidiphilum infernorum (isolate V4)</name>
    <name type="common">Methylokorus infernorum (strain V4)</name>
    <dbReference type="NCBI Taxonomy" id="481448"/>
    <lineage>
        <taxon>Bacteria</taxon>
        <taxon>Pseudomonadati</taxon>
        <taxon>Verrucomicrobiota</taxon>
        <taxon>Methylacidiphilae</taxon>
        <taxon>Methylacidiphilales</taxon>
        <taxon>Methylacidiphilaceae</taxon>
        <taxon>Methylacidiphilum (ex Ratnadevi et al. 2023)</taxon>
    </lineage>
</organism>
<keyword id="KW-0687">Ribonucleoprotein</keyword>
<keyword id="KW-0689">Ribosomal protein</keyword>
<keyword id="KW-0694">RNA-binding</keyword>
<keyword id="KW-0699">rRNA-binding</keyword>
<sequence length="88" mass="10586">MEVETDKKKLIESFRLHEKDTGSAVVQVALLTQKIKRLTAHLQNNRKDHSSRRGLLRMVNRRRKLLEYLNRTEPEKYREMLSRLSLRK</sequence>
<reference key="1">
    <citation type="journal article" date="2008" name="Biol. Direct">
        <title>Complete genome sequence of the extremely acidophilic methanotroph isolate V4, Methylacidiphilum infernorum, a representative of the bacterial phylum Verrucomicrobia.</title>
        <authorList>
            <person name="Hou S."/>
            <person name="Makarova K.S."/>
            <person name="Saw J.H."/>
            <person name="Senin P."/>
            <person name="Ly B.V."/>
            <person name="Zhou Z."/>
            <person name="Ren Y."/>
            <person name="Wang J."/>
            <person name="Galperin M.Y."/>
            <person name="Omelchenko M.V."/>
            <person name="Wolf Y.I."/>
            <person name="Yutin N."/>
            <person name="Koonin E.V."/>
            <person name="Stott M.B."/>
            <person name="Mountain B.W."/>
            <person name="Crowe M.A."/>
            <person name="Smirnova A.V."/>
            <person name="Dunfield P.F."/>
            <person name="Feng L."/>
            <person name="Wang L."/>
            <person name="Alam M."/>
        </authorList>
    </citation>
    <scope>NUCLEOTIDE SEQUENCE [LARGE SCALE GENOMIC DNA]</scope>
    <source>
        <strain>Isolate V4</strain>
    </source>
</reference>
<gene>
    <name evidence="1" type="primary">rpsO</name>
    <name type="ordered locus">Minf_2125</name>
</gene>
<feature type="chain" id="PRO_0000354204" description="Small ribosomal subunit protein uS15">
    <location>
        <begin position="1"/>
        <end position="88"/>
    </location>
</feature>
<evidence type="ECO:0000255" key="1">
    <source>
        <dbReference type="HAMAP-Rule" id="MF_01343"/>
    </source>
</evidence>
<evidence type="ECO:0000305" key="2"/>
<comment type="function">
    <text evidence="1">One of the primary rRNA binding proteins, it binds directly to 16S rRNA where it helps nucleate assembly of the platform of the 30S subunit by binding and bridging several RNA helices of the 16S rRNA.</text>
</comment>
<comment type="function">
    <text evidence="1">Forms an intersubunit bridge (bridge B4) with the 23S rRNA of the 50S subunit in the ribosome.</text>
</comment>
<comment type="subunit">
    <text evidence="1">Part of the 30S ribosomal subunit. Forms a bridge to the 50S subunit in the 70S ribosome, contacting the 23S rRNA.</text>
</comment>
<comment type="similarity">
    <text evidence="1">Belongs to the universal ribosomal protein uS15 family.</text>
</comment>
<name>RS15_METI4</name>
<dbReference type="EMBL" id="CP000975">
    <property type="protein sequence ID" value="ACD84179.1"/>
    <property type="molecule type" value="Genomic_DNA"/>
</dbReference>
<dbReference type="RefSeq" id="WP_012464461.1">
    <property type="nucleotide sequence ID" value="NC_010794.1"/>
</dbReference>
<dbReference type="SMR" id="B3DZ87"/>
<dbReference type="STRING" id="481448.Minf_2125"/>
<dbReference type="KEGG" id="min:Minf_2125"/>
<dbReference type="eggNOG" id="COG0184">
    <property type="taxonomic scope" value="Bacteria"/>
</dbReference>
<dbReference type="HOGENOM" id="CLU_148518_0_0_0"/>
<dbReference type="Proteomes" id="UP000009149">
    <property type="component" value="Chromosome"/>
</dbReference>
<dbReference type="GO" id="GO:0005737">
    <property type="term" value="C:cytoplasm"/>
    <property type="evidence" value="ECO:0007669"/>
    <property type="project" value="UniProtKB-ARBA"/>
</dbReference>
<dbReference type="GO" id="GO:1990904">
    <property type="term" value="C:ribonucleoprotein complex"/>
    <property type="evidence" value="ECO:0007669"/>
    <property type="project" value="UniProtKB-KW"/>
</dbReference>
<dbReference type="GO" id="GO:0005840">
    <property type="term" value="C:ribosome"/>
    <property type="evidence" value="ECO:0007669"/>
    <property type="project" value="UniProtKB-KW"/>
</dbReference>
<dbReference type="GO" id="GO:0019843">
    <property type="term" value="F:rRNA binding"/>
    <property type="evidence" value="ECO:0007669"/>
    <property type="project" value="UniProtKB-UniRule"/>
</dbReference>
<dbReference type="GO" id="GO:0003735">
    <property type="term" value="F:structural constituent of ribosome"/>
    <property type="evidence" value="ECO:0007669"/>
    <property type="project" value="InterPro"/>
</dbReference>
<dbReference type="GO" id="GO:0006412">
    <property type="term" value="P:translation"/>
    <property type="evidence" value="ECO:0007669"/>
    <property type="project" value="UniProtKB-UniRule"/>
</dbReference>
<dbReference type="CDD" id="cd00353">
    <property type="entry name" value="Ribosomal_S15p_S13e"/>
    <property type="match status" value="1"/>
</dbReference>
<dbReference type="FunFam" id="1.10.287.10:FF:000002">
    <property type="entry name" value="30S ribosomal protein S15"/>
    <property type="match status" value="1"/>
</dbReference>
<dbReference type="Gene3D" id="6.10.250.3130">
    <property type="match status" value="1"/>
</dbReference>
<dbReference type="Gene3D" id="1.10.287.10">
    <property type="entry name" value="S15/NS1, RNA-binding"/>
    <property type="match status" value="1"/>
</dbReference>
<dbReference type="HAMAP" id="MF_01343_B">
    <property type="entry name" value="Ribosomal_uS15_B"/>
    <property type="match status" value="1"/>
</dbReference>
<dbReference type="InterPro" id="IPR000589">
    <property type="entry name" value="Ribosomal_uS15"/>
</dbReference>
<dbReference type="InterPro" id="IPR005290">
    <property type="entry name" value="Ribosomal_uS15_bac-type"/>
</dbReference>
<dbReference type="InterPro" id="IPR009068">
    <property type="entry name" value="uS15_NS1_RNA-bd_sf"/>
</dbReference>
<dbReference type="NCBIfam" id="TIGR00952">
    <property type="entry name" value="S15_bact"/>
    <property type="match status" value="1"/>
</dbReference>
<dbReference type="PANTHER" id="PTHR23321">
    <property type="entry name" value="RIBOSOMAL PROTEIN S15, BACTERIAL AND ORGANELLAR"/>
    <property type="match status" value="1"/>
</dbReference>
<dbReference type="PANTHER" id="PTHR23321:SF26">
    <property type="entry name" value="SMALL RIBOSOMAL SUBUNIT PROTEIN US15M"/>
    <property type="match status" value="1"/>
</dbReference>
<dbReference type="Pfam" id="PF00312">
    <property type="entry name" value="Ribosomal_S15"/>
    <property type="match status" value="1"/>
</dbReference>
<dbReference type="SMART" id="SM01387">
    <property type="entry name" value="Ribosomal_S15"/>
    <property type="match status" value="1"/>
</dbReference>
<dbReference type="SUPFAM" id="SSF47060">
    <property type="entry name" value="S15/NS1 RNA-binding domain"/>
    <property type="match status" value="1"/>
</dbReference>
<dbReference type="PROSITE" id="PS00362">
    <property type="entry name" value="RIBOSOMAL_S15"/>
    <property type="match status" value="1"/>
</dbReference>
<protein>
    <recommendedName>
        <fullName evidence="1">Small ribosomal subunit protein uS15</fullName>
    </recommendedName>
    <alternativeName>
        <fullName evidence="2">30S ribosomal protein S15</fullName>
    </alternativeName>
</protein>
<proteinExistence type="inferred from homology"/>
<accession>B3DZ87</accession>